<evidence type="ECO:0000250" key="1"/>
<evidence type="ECO:0000305" key="2"/>
<proteinExistence type="evidence at protein level"/>
<feature type="chain" id="PRO_0000051791" description="Cytochrome P450 3A8">
    <location>
        <begin position="1"/>
        <end position="503"/>
    </location>
</feature>
<feature type="binding site" description="axial binding residue" evidence="1">
    <location>
        <position position="442"/>
    </location>
    <ligand>
        <name>heme</name>
        <dbReference type="ChEBI" id="CHEBI:30413"/>
    </ligand>
    <ligandPart>
        <name>Fe</name>
        <dbReference type="ChEBI" id="CHEBI:18248"/>
    </ligandPart>
</feature>
<name>CP3A8_MACFA</name>
<sequence length="503" mass="57511">MDLIPDLAVETWLLLAVTLVLLYLYGTHSHGLFKKLGIPGPTPLPLLGNILSYRKGFWTFDMECYKKYGKVWGFYDGRQPVLAITDPNMIKTVLVKECYSVFTNRRPFGPVGFMKNAISIAEDEEWKRIRSLLSPTFTSGKLKEMVPIIAKYGDVLVRNLRREAETGKPVTLKDVFGAYSMDVITSTSFGVNIDSLNNPQDPFVENTKKLLRFDFLDPFFLSITIFPFIIPILEVLNISIFPREVTSFLRKSVKRIKESRLKDTQKHRVDFLQLMIDSQNSKETESHKALSDLELVAQSIIFIFAGYETTSSVLSFIIYELATHPDVQQKLQEEIDTVLPNKAPPTYDTVLQMEYLDMVVNETLRIFPIAMRLERVCKKDVEINGIFIPKGVVVMIPSYALHHDPKYWPEPEKFLPERFSKKNNDNIDPYIYTPFGSGPRNCIGMRFALMNMKLAIIRVLQNFSFKPCKETQIPLKLRLGGLLQTEKPIVLKIESRDGTVSGA</sequence>
<comment type="function">
    <text>Catalyzes nifedipine and nilvadipine oxidations.</text>
</comment>
<comment type="catalytic activity">
    <reaction>
        <text>an organic molecule + reduced [NADPH--hemoprotein reductase] + O2 = an alcohol + oxidized [NADPH--hemoprotein reductase] + H2O + H(+)</text>
        <dbReference type="Rhea" id="RHEA:17149"/>
        <dbReference type="Rhea" id="RHEA-COMP:11964"/>
        <dbReference type="Rhea" id="RHEA-COMP:11965"/>
        <dbReference type="ChEBI" id="CHEBI:15377"/>
        <dbReference type="ChEBI" id="CHEBI:15378"/>
        <dbReference type="ChEBI" id="CHEBI:15379"/>
        <dbReference type="ChEBI" id="CHEBI:30879"/>
        <dbReference type="ChEBI" id="CHEBI:57618"/>
        <dbReference type="ChEBI" id="CHEBI:58210"/>
        <dbReference type="ChEBI" id="CHEBI:142491"/>
        <dbReference type="EC" id="1.14.14.1"/>
    </reaction>
</comment>
<comment type="cofactor">
    <cofactor evidence="1">
        <name>heme</name>
        <dbReference type="ChEBI" id="CHEBI:30413"/>
    </cofactor>
</comment>
<comment type="subcellular location">
    <subcellularLocation>
        <location>Endoplasmic reticulum membrane</location>
        <topology>Peripheral membrane protein</topology>
    </subcellularLocation>
    <subcellularLocation>
        <location>Microsome membrane</location>
        <topology>Peripheral membrane protein</topology>
    </subcellularLocation>
</comment>
<comment type="induction">
    <text>By polychlorinated biphenyl (PCB).</text>
</comment>
<comment type="similarity">
    <text evidence="2">Belongs to the cytochrome P450 family.</text>
</comment>
<reference key="1">
    <citation type="journal article" date="1992" name="Biochim. Biophys. Acta">
        <title>Molecular cloning of monkey liver cytochrome P-450 cDNAs: similarity of the primary sequences to human cytochromes P-450.</title>
        <authorList>
            <person name="Komori M."/>
            <person name="Kikuchi O."/>
            <person name="Sakuma T."/>
            <person name="Funaki J."/>
            <person name="Kitada M."/>
            <person name="Kamataki T."/>
        </authorList>
    </citation>
    <scope>NUCLEOTIDE SEQUENCE [MRNA]</scope>
    <source>
        <tissue>Liver</tissue>
    </source>
</reference>
<reference key="2">
    <citation type="journal article" date="1989" name="Biochim. Biophys. Acta">
        <title>Purification of cytochrome P-450 from polychlorinated biphenyl-treated crab-eating monkeys: high homology to a form of human cytochrome P-450.</title>
        <authorList>
            <person name="Ohta K."/>
            <person name="Kitada M."/>
            <person name="Hashizume T."/>
            <person name="Komori M."/>
            <person name="Ohi H."/>
            <person name="Kamataki T."/>
        </authorList>
    </citation>
    <scope>PROTEIN SEQUENCE OF 1-22</scope>
    <source>
        <tissue>Liver</tissue>
    </source>
</reference>
<reference key="3">
    <citation type="journal article" date="1993" name="Arch. Biochem. Biophys.">
        <title>Purification and characterization of two forms of hepatic microsomal cytochrome P450 from untreated cynomolgus monkeys.</title>
        <authorList>
            <person name="Ohmori S."/>
            <person name="Horie T."/>
            <person name="Guengerich F.P."/>
            <person name="Kiuchi M."/>
            <person name="Kitada M."/>
        </authorList>
    </citation>
    <scope>CHARACTERIZATION</scope>
</reference>
<gene>
    <name type="primary">CYP3A8</name>
</gene>
<accession>P33268</accession>
<accession>P25231</accession>
<keyword id="KW-0903">Direct protein sequencing</keyword>
<keyword id="KW-0256">Endoplasmic reticulum</keyword>
<keyword id="KW-0349">Heme</keyword>
<keyword id="KW-0408">Iron</keyword>
<keyword id="KW-0472">Membrane</keyword>
<keyword id="KW-0479">Metal-binding</keyword>
<keyword id="KW-0492">Microsome</keyword>
<keyword id="KW-0503">Monooxygenase</keyword>
<keyword id="KW-0560">Oxidoreductase</keyword>
<keyword id="KW-1185">Reference proteome</keyword>
<dbReference type="EC" id="1.14.14.1"/>
<dbReference type="EMBL" id="S53047">
    <property type="protein sequence ID" value="AAB24952.1"/>
    <property type="molecule type" value="mRNA"/>
</dbReference>
<dbReference type="PIR" id="S28168">
    <property type="entry name" value="S28168"/>
</dbReference>
<dbReference type="RefSeq" id="NP_001271463.1">
    <property type="nucleotide sequence ID" value="NM_001284534.1"/>
</dbReference>
<dbReference type="SMR" id="P33268"/>
<dbReference type="STRING" id="9541.ENSMFAP00000039737"/>
<dbReference type="VEuPathDB" id="HostDB:ENSMFAG00000046026"/>
<dbReference type="eggNOG" id="KOG0158">
    <property type="taxonomic scope" value="Eukaryota"/>
</dbReference>
<dbReference type="OMA" id="QPFHTGP"/>
<dbReference type="Proteomes" id="UP000233100">
    <property type="component" value="Chromosome 3"/>
</dbReference>
<dbReference type="GO" id="GO:0005789">
    <property type="term" value="C:endoplasmic reticulum membrane"/>
    <property type="evidence" value="ECO:0007669"/>
    <property type="project" value="UniProtKB-SubCell"/>
</dbReference>
<dbReference type="GO" id="GO:0101020">
    <property type="term" value="F:estrogen 16-alpha-hydroxylase activity"/>
    <property type="evidence" value="ECO:0007669"/>
    <property type="project" value="TreeGrafter"/>
</dbReference>
<dbReference type="GO" id="GO:0020037">
    <property type="term" value="F:heme binding"/>
    <property type="evidence" value="ECO:0007669"/>
    <property type="project" value="InterPro"/>
</dbReference>
<dbReference type="GO" id="GO:0005506">
    <property type="term" value="F:iron ion binding"/>
    <property type="evidence" value="ECO:0007669"/>
    <property type="project" value="InterPro"/>
</dbReference>
<dbReference type="GO" id="GO:0004497">
    <property type="term" value="F:monooxygenase activity"/>
    <property type="evidence" value="ECO:0000250"/>
    <property type="project" value="UniProtKB"/>
</dbReference>
<dbReference type="GO" id="GO:0050649">
    <property type="term" value="F:testosterone 6-beta-hydroxylase activity"/>
    <property type="evidence" value="ECO:0007669"/>
    <property type="project" value="TreeGrafter"/>
</dbReference>
<dbReference type="GO" id="GO:0070989">
    <property type="term" value="P:oxidative demethylation"/>
    <property type="evidence" value="ECO:0007669"/>
    <property type="project" value="TreeGrafter"/>
</dbReference>
<dbReference type="GO" id="GO:0008202">
    <property type="term" value="P:steroid metabolic process"/>
    <property type="evidence" value="ECO:0007669"/>
    <property type="project" value="TreeGrafter"/>
</dbReference>
<dbReference type="CDD" id="cd20650">
    <property type="entry name" value="CYP3A"/>
    <property type="match status" value="1"/>
</dbReference>
<dbReference type="FunFam" id="1.10.630.10:FF:000096">
    <property type="entry name" value="Cytochrome P450 3A4"/>
    <property type="match status" value="1"/>
</dbReference>
<dbReference type="Gene3D" id="1.10.630.10">
    <property type="entry name" value="Cytochrome P450"/>
    <property type="match status" value="1"/>
</dbReference>
<dbReference type="InterPro" id="IPR001128">
    <property type="entry name" value="Cyt_P450"/>
</dbReference>
<dbReference type="InterPro" id="IPR017972">
    <property type="entry name" value="Cyt_P450_CS"/>
</dbReference>
<dbReference type="InterPro" id="IPR008072">
    <property type="entry name" value="Cyt_P450_E_CYP3A"/>
</dbReference>
<dbReference type="InterPro" id="IPR002402">
    <property type="entry name" value="Cyt_P450_E_grp-II"/>
</dbReference>
<dbReference type="InterPro" id="IPR036396">
    <property type="entry name" value="Cyt_P450_sf"/>
</dbReference>
<dbReference type="InterPro" id="IPR050705">
    <property type="entry name" value="Cytochrome_P450_3A"/>
</dbReference>
<dbReference type="PANTHER" id="PTHR24302:SF38">
    <property type="entry name" value="CYTOCHROME P450 3A5"/>
    <property type="match status" value="1"/>
</dbReference>
<dbReference type="PANTHER" id="PTHR24302">
    <property type="entry name" value="CYTOCHROME P450 FAMILY 3"/>
    <property type="match status" value="1"/>
</dbReference>
<dbReference type="Pfam" id="PF00067">
    <property type="entry name" value="p450"/>
    <property type="match status" value="1"/>
</dbReference>
<dbReference type="PRINTS" id="PR00464">
    <property type="entry name" value="EP450II"/>
</dbReference>
<dbReference type="PRINTS" id="PR01689">
    <property type="entry name" value="EP450IICYP3A"/>
</dbReference>
<dbReference type="PRINTS" id="PR00385">
    <property type="entry name" value="P450"/>
</dbReference>
<dbReference type="SUPFAM" id="SSF48264">
    <property type="entry name" value="Cytochrome P450"/>
    <property type="match status" value="1"/>
</dbReference>
<dbReference type="PROSITE" id="PS00086">
    <property type="entry name" value="CYTOCHROME_P450"/>
    <property type="match status" value="1"/>
</dbReference>
<protein>
    <recommendedName>
        <fullName>Cytochrome P450 3A8</fullName>
        <ecNumber>1.14.14.1</ecNumber>
    </recommendedName>
    <alternativeName>
        <fullName>CYPIIIA8</fullName>
    </alternativeName>
    <alternativeName>
        <fullName>Cytochrome P-450-MK2</fullName>
    </alternativeName>
    <alternativeName>
        <fullName>Cytochrome P450-MKNF2</fullName>
    </alternativeName>
</protein>
<organism>
    <name type="scientific">Macaca fascicularis</name>
    <name type="common">Crab-eating macaque</name>
    <name type="synonym">Cynomolgus monkey</name>
    <dbReference type="NCBI Taxonomy" id="9541"/>
    <lineage>
        <taxon>Eukaryota</taxon>
        <taxon>Metazoa</taxon>
        <taxon>Chordata</taxon>
        <taxon>Craniata</taxon>
        <taxon>Vertebrata</taxon>
        <taxon>Euteleostomi</taxon>
        <taxon>Mammalia</taxon>
        <taxon>Eutheria</taxon>
        <taxon>Euarchontoglires</taxon>
        <taxon>Primates</taxon>
        <taxon>Haplorrhini</taxon>
        <taxon>Catarrhini</taxon>
        <taxon>Cercopithecidae</taxon>
        <taxon>Cercopithecinae</taxon>
        <taxon>Macaca</taxon>
    </lineage>
</organism>